<protein>
    <recommendedName>
        <fullName evidence="1">Autonomous glycyl radical cofactor</fullName>
    </recommendedName>
</protein>
<keyword id="KW-0007">Acetylation</keyword>
<keyword id="KW-0556">Organic radical</keyword>
<keyword id="KW-1185">Reference proteome</keyword>
<organism>
    <name type="scientific">Escherichia coli O127:H6 (strain E2348/69 / EPEC)</name>
    <dbReference type="NCBI Taxonomy" id="574521"/>
    <lineage>
        <taxon>Bacteria</taxon>
        <taxon>Pseudomonadati</taxon>
        <taxon>Pseudomonadota</taxon>
        <taxon>Gammaproteobacteria</taxon>
        <taxon>Enterobacterales</taxon>
        <taxon>Enterobacteriaceae</taxon>
        <taxon>Escherichia</taxon>
    </lineage>
</organism>
<dbReference type="EMBL" id="FM180568">
    <property type="protein sequence ID" value="CAS10404.1"/>
    <property type="molecule type" value="Genomic_DNA"/>
</dbReference>
<dbReference type="RefSeq" id="WP_000627804.1">
    <property type="nucleotide sequence ID" value="NC_011601.1"/>
</dbReference>
<dbReference type="SMR" id="B7UH18"/>
<dbReference type="GeneID" id="89517377"/>
<dbReference type="KEGG" id="ecg:E2348C_2856"/>
<dbReference type="HOGENOM" id="CLU_133780_0_0_6"/>
<dbReference type="Proteomes" id="UP000008205">
    <property type="component" value="Chromosome"/>
</dbReference>
<dbReference type="GO" id="GO:0005829">
    <property type="term" value="C:cytosol"/>
    <property type="evidence" value="ECO:0007669"/>
    <property type="project" value="TreeGrafter"/>
</dbReference>
<dbReference type="GO" id="GO:0008861">
    <property type="term" value="F:formate C-acetyltransferase activity"/>
    <property type="evidence" value="ECO:0007669"/>
    <property type="project" value="TreeGrafter"/>
</dbReference>
<dbReference type="FunFam" id="3.20.70.20:FF:000002">
    <property type="entry name" value="Autonomous glycyl radical cofactor"/>
    <property type="match status" value="1"/>
</dbReference>
<dbReference type="Gene3D" id="3.20.70.20">
    <property type="match status" value="1"/>
</dbReference>
<dbReference type="HAMAP" id="MF_00806">
    <property type="entry name" value="GrcA"/>
    <property type="match status" value="1"/>
</dbReference>
<dbReference type="InterPro" id="IPR050244">
    <property type="entry name" value="Auton_GlycylRad_Cofactor"/>
</dbReference>
<dbReference type="InterPro" id="IPR019777">
    <property type="entry name" value="Form_AcTrfase_GR_CS"/>
</dbReference>
<dbReference type="InterPro" id="IPR001150">
    <property type="entry name" value="Gly_radical"/>
</dbReference>
<dbReference type="InterPro" id="IPR011140">
    <property type="entry name" value="Glycyl_radical_cofactor_GrcA"/>
</dbReference>
<dbReference type="NCBIfam" id="TIGR04365">
    <property type="entry name" value="spare_glycyl"/>
    <property type="match status" value="1"/>
</dbReference>
<dbReference type="PANTHER" id="PTHR30191">
    <property type="entry name" value="FORMATE ACETYLTRANSFERASE"/>
    <property type="match status" value="1"/>
</dbReference>
<dbReference type="PANTHER" id="PTHR30191:SF0">
    <property type="entry name" value="FORMATE ACETYLTRANSFERASE 1"/>
    <property type="match status" value="1"/>
</dbReference>
<dbReference type="Pfam" id="PF01228">
    <property type="entry name" value="Gly_radical"/>
    <property type="match status" value="1"/>
</dbReference>
<dbReference type="PIRSF" id="PIRSF000378">
    <property type="entry name" value="Gly_radicl_yfiD"/>
    <property type="match status" value="1"/>
</dbReference>
<dbReference type="SUPFAM" id="SSF51998">
    <property type="entry name" value="PFL-like glycyl radical enzymes"/>
    <property type="match status" value="1"/>
</dbReference>
<dbReference type="PROSITE" id="PS00850">
    <property type="entry name" value="GLY_RADICAL_1"/>
    <property type="match status" value="1"/>
</dbReference>
<dbReference type="PROSITE" id="PS51149">
    <property type="entry name" value="GLY_RADICAL_2"/>
    <property type="match status" value="1"/>
</dbReference>
<sequence>MITGIQITKAANDDLLNSFWLLDSEKGEARCIVAKAGFAEDEVVAVSKLGDIEYREVPVEVKPEVRVEGGQHLNVNVLRRETLEDAVKHPEKYPQLTIRVSGYAVRFNSLTPEQQRDVIARTFTESL</sequence>
<gene>
    <name evidence="1" type="primary">grcA</name>
    <name type="ordered locus">E2348C_2856</name>
</gene>
<evidence type="ECO:0000255" key="1">
    <source>
        <dbReference type="HAMAP-Rule" id="MF_00806"/>
    </source>
</evidence>
<reference key="1">
    <citation type="journal article" date="2009" name="J. Bacteriol.">
        <title>Complete genome sequence and comparative genome analysis of enteropathogenic Escherichia coli O127:H6 strain E2348/69.</title>
        <authorList>
            <person name="Iguchi A."/>
            <person name="Thomson N.R."/>
            <person name="Ogura Y."/>
            <person name="Saunders D."/>
            <person name="Ooka T."/>
            <person name="Henderson I.R."/>
            <person name="Harris D."/>
            <person name="Asadulghani M."/>
            <person name="Kurokawa K."/>
            <person name="Dean P."/>
            <person name="Kenny B."/>
            <person name="Quail M.A."/>
            <person name="Thurston S."/>
            <person name="Dougan G."/>
            <person name="Hayashi T."/>
            <person name="Parkhill J."/>
            <person name="Frankel G."/>
        </authorList>
    </citation>
    <scope>NUCLEOTIDE SEQUENCE [LARGE SCALE GENOMIC DNA]</scope>
    <source>
        <strain>E2348/69 / EPEC</strain>
    </source>
</reference>
<feature type="chain" id="PRO_1000148567" description="Autonomous glycyl radical cofactor">
    <location>
        <begin position="1"/>
        <end position="127"/>
    </location>
</feature>
<feature type="domain" description="Glycine radical" evidence="1">
    <location>
        <begin position="5"/>
        <end position="127"/>
    </location>
</feature>
<feature type="modified residue" description="N6-acetyllysine" evidence="1">
    <location>
        <position position="48"/>
    </location>
</feature>
<feature type="modified residue" description="N6-acetyllysine" evidence="1">
    <location>
        <position position="88"/>
    </location>
</feature>
<feature type="modified residue" description="N6-acetyllysine" evidence="1">
    <location>
        <position position="92"/>
    </location>
</feature>
<feature type="modified residue" description="Glycine radical" evidence="1">
    <location>
        <position position="102"/>
    </location>
</feature>
<comment type="function">
    <text evidence="1">Acts as a radical domain for damaged PFL and possibly other radical proteins.</text>
</comment>
<name>GRCA_ECO27</name>
<proteinExistence type="inferred from homology"/>
<accession>B7UH18</accession>